<feature type="chain" id="PRO_0000456431" description="Nuclear hormone receptor family member nhr-80">
    <location>
        <begin position="1"/>
        <end position="504"/>
    </location>
</feature>
<feature type="domain" description="NR LBD" evidence="2">
    <location>
        <begin position="214"/>
        <end position="466"/>
    </location>
</feature>
<feature type="DNA-binding region" description="Nuclear receptor" evidence="1">
    <location>
        <begin position="27"/>
        <end position="103"/>
    </location>
</feature>
<feature type="zinc finger region" description="NR C4-type" evidence="1">
    <location>
        <begin position="30"/>
        <end position="50"/>
    </location>
</feature>
<feature type="zinc finger region" description="NR C4-type" evidence="1">
    <location>
        <begin position="66"/>
        <end position="86"/>
    </location>
</feature>
<feature type="region of interest" description="Disordered" evidence="4">
    <location>
        <begin position="177"/>
        <end position="199"/>
    </location>
</feature>
<feature type="region of interest" description="AF-2" evidence="2">
    <location>
        <begin position="455"/>
        <end position="466"/>
    </location>
</feature>
<feature type="compositionally biased region" description="Low complexity" evidence="4">
    <location>
        <begin position="177"/>
        <end position="192"/>
    </location>
</feature>
<feature type="splice variant" id="VSP_061619" description="In isoform a." evidence="12">
    <location>
        <begin position="5"/>
        <end position="22"/>
    </location>
</feature>
<gene>
    <name evidence="16" type="primary">nhr-80</name>
    <name evidence="16" type="ORF">H10E21.3</name>
</gene>
<protein>
    <recommendedName>
        <fullName evidence="16">Nuclear hormone receptor family member nhr-80</fullName>
    </recommendedName>
</protein>
<comment type="function">
    <text evidence="5 6 7 8 9 10 11">Transcription factor (PubMed:16839188, PubMed:35021096). Binds to regulatory elements and regulates transcription of target genes, including acyltransferase dgat-2 (PubMed:35021096). As part of a lysosome-to-nucleus retrograde lipid signaling pathway, acts as a direct nuclear receptor of oleoylethanolamide (OEA) and, acting in concert with nuclear hormone receptor nhr-49, activates the transcription of genes promoting longevity and mitochondrial beta-oxidation (PubMed:25554789, PubMed:26671266). Required to modulate expression of delta-9 fatty acid desaturases, thereby regulating lipid metabolism; in some contexts, acting in concert with nhr-49 (PubMed:16839188, PubMed:21423649, PubMed:22511885). Involved in modulation of lipid metabolism in response to the citrate-induced mitochondrial unfolded protein response (mtUPR), acting downstream of transcription factor dve-1 and ubiquitin-like protein 5 (PubMed:35021096). Plays a role in modulating mitochondrial morphology and function (PubMed:22511885). Involved in positively modulating life-span in a germline-dependent manner, acting in concert with nuclear hormone receptor daf-12 (PubMed:21423649). Plays a role in transgenerational lipid accumulation in response to a high-fat diet (PubMed:35140229).</text>
</comment>
<comment type="subunit">
    <text evidence="7">Interacts with nuclear hormone receptor nhr-49; the interaction is direct.</text>
</comment>
<comment type="subcellular location">
    <subcellularLocation>
        <location evidence="3 6 10">Nucleus</location>
    </subcellularLocation>
</comment>
<comment type="alternative products">
    <event type="alternative splicing"/>
    <isoform>
        <id>Q8ITW8-1</id>
        <name evidence="16">b</name>
        <sequence type="displayed"/>
    </isoform>
    <isoform>
        <id>Q8ITW8-2</id>
        <name evidence="15">a</name>
        <sequence type="described" ref="VSP_061619"/>
    </isoform>
</comment>
<comment type="tissue specificity">
    <text evidence="6 10">Expressed in the intestine and in some head and tail neurons, as well as the ventral nerve cord.</text>
</comment>
<comment type="induction">
    <text evidence="10">Expression increased by citrate dietary supplementation.</text>
</comment>
<comment type="disruption phenotype">
    <text evidence="5 6 11">RNAi-mediated knockdown causes a change in fatty acid composition, including an increase in saturated fatty acid 18:0 and decrease in unsaturated 18:1 (PubMed:16839188). In a fatty acid desaturase fat-6 mutant background, become thin, slow growing, reproductively inviable after 4 days, and accumulate very high levels of 18:0 saturated fatty acid (PubMed:16839188). In a fat-6 mutant background, also drastically reduces expression of fat-7 (PubMed:16839188). In either a fat-5 or fat-7 mutant background, accumulates high levels of 18:0 saturated fatty acid, but less so than in the fat-6 mutant background (PubMed:16839188). Significantly reduced lifespan in a glp-1 mutant background, but does not affect lifespan of wild type (PubMed:21423649). Knockdown in the first generation offspring (F1) of adults fed a high-fat diet prevents lipid accumulation (PubMed:35140229).</text>
</comment>
<comment type="similarity">
    <text evidence="3">Belongs to the nuclear hormone receptor family.</text>
</comment>
<name>NHR80_CAEEL</name>
<dbReference type="EMBL" id="AF332209">
    <property type="protein sequence ID" value="AAK17980.1"/>
    <property type="molecule type" value="mRNA"/>
</dbReference>
<dbReference type="EMBL" id="AY204179">
    <property type="protein sequence ID" value="AAO39183.1"/>
    <property type="molecule type" value="mRNA"/>
</dbReference>
<dbReference type="EMBL" id="BX284603">
    <property type="protein sequence ID" value="CCD68270.1"/>
    <property type="molecule type" value="Genomic_DNA"/>
</dbReference>
<dbReference type="EMBL" id="BX284603">
    <property type="protein sequence ID" value="CCD68271.1"/>
    <property type="molecule type" value="Genomic_DNA"/>
</dbReference>
<dbReference type="PIR" id="T33404">
    <property type="entry name" value="T33404"/>
</dbReference>
<dbReference type="RefSeq" id="NP_497126.1">
    <molecule id="Q8ITW8-2"/>
    <property type="nucleotide sequence ID" value="NM_064725.7"/>
</dbReference>
<dbReference type="RefSeq" id="NP_871630.1">
    <molecule id="Q8ITW8-1"/>
    <property type="nucleotide sequence ID" value="NM_181901.2"/>
</dbReference>
<dbReference type="DIP" id="DIP-27031N"/>
<dbReference type="FunCoup" id="Q8ITW8">
    <property type="interactions" value="678"/>
</dbReference>
<dbReference type="STRING" id="6239.H10E21.3b.1"/>
<dbReference type="PaxDb" id="6239-H10E21.3b"/>
<dbReference type="EnsemblMetazoa" id="H10E21.3a.1">
    <molecule id="Q8ITW8-2"/>
    <property type="protein sequence ID" value="H10E21.3a.1"/>
    <property type="gene ID" value="WBGene00003670"/>
</dbReference>
<dbReference type="EnsemblMetazoa" id="H10E21.3b.1">
    <molecule id="Q8ITW8-1"/>
    <property type="protein sequence ID" value="H10E21.3b.1"/>
    <property type="gene ID" value="WBGene00003670"/>
</dbReference>
<dbReference type="GeneID" id="175167"/>
<dbReference type="KEGG" id="cel:CELE_H10E21.3"/>
<dbReference type="UCSC" id="H10E21.3a">
    <property type="organism name" value="c. elegans"/>
</dbReference>
<dbReference type="AGR" id="WB:WBGene00003670"/>
<dbReference type="CTD" id="175167"/>
<dbReference type="WormBase" id="H10E21.3a">
    <molecule id="Q8ITW8-2"/>
    <property type="protein sequence ID" value="CE28733"/>
    <property type="gene ID" value="WBGene00003670"/>
    <property type="gene designation" value="nhr-80"/>
</dbReference>
<dbReference type="WormBase" id="H10E21.3b">
    <molecule id="Q8ITW8-1"/>
    <property type="protein sequence ID" value="CE19488"/>
    <property type="gene ID" value="WBGene00003670"/>
    <property type="gene designation" value="nhr-80"/>
</dbReference>
<dbReference type="eggNOG" id="KOG3575">
    <property type="taxonomic scope" value="Eukaryota"/>
</dbReference>
<dbReference type="HOGENOM" id="CLU_007368_17_1_1"/>
<dbReference type="InParanoid" id="Q8ITW8"/>
<dbReference type="OMA" id="MHQICRS"/>
<dbReference type="OrthoDB" id="5799427at2759"/>
<dbReference type="PhylomeDB" id="Q8ITW8"/>
<dbReference type="PRO" id="PR:Q8ITW8"/>
<dbReference type="Proteomes" id="UP000001940">
    <property type="component" value="Chromosome III"/>
</dbReference>
<dbReference type="Bgee" id="WBGene00003670">
    <property type="expression patterns" value="Expressed in larva and 2 other cell types or tissues"/>
</dbReference>
<dbReference type="ExpressionAtlas" id="Q8ITW8">
    <property type="expression patterns" value="baseline and differential"/>
</dbReference>
<dbReference type="GO" id="GO:0005634">
    <property type="term" value="C:nucleus"/>
    <property type="evidence" value="ECO:0000314"/>
    <property type="project" value="WormBase"/>
</dbReference>
<dbReference type="GO" id="GO:0003700">
    <property type="term" value="F:DNA-binding transcription factor activity"/>
    <property type="evidence" value="ECO:0007669"/>
    <property type="project" value="InterPro"/>
</dbReference>
<dbReference type="GO" id="GO:0000978">
    <property type="term" value="F:RNA polymerase II cis-regulatory region sequence-specific DNA binding"/>
    <property type="evidence" value="ECO:0007669"/>
    <property type="project" value="InterPro"/>
</dbReference>
<dbReference type="GO" id="GO:0008270">
    <property type="term" value="F:zinc ion binding"/>
    <property type="evidence" value="ECO:0007669"/>
    <property type="project" value="UniProtKB-KW"/>
</dbReference>
<dbReference type="GO" id="GO:0008340">
    <property type="term" value="P:determination of adult lifespan"/>
    <property type="evidence" value="ECO:0000316"/>
    <property type="project" value="WormBase"/>
</dbReference>
<dbReference type="GO" id="GO:0006629">
    <property type="term" value="P:lipid metabolic process"/>
    <property type="evidence" value="ECO:0000315"/>
    <property type="project" value="UniProtKB"/>
</dbReference>
<dbReference type="GO" id="GO:0000122">
    <property type="term" value="P:negative regulation of transcription by RNA polymerase II"/>
    <property type="evidence" value="ECO:0000315"/>
    <property type="project" value="UniProtKB"/>
</dbReference>
<dbReference type="GO" id="GO:0045923">
    <property type="term" value="P:positive regulation of fatty acid metabolic process"/>
    <property type="evidence" value="ECO:0000315"/>
    <property type="project" value="WormBase"/>
</dbReference>
<dbReference type="GO" id="GO:0045944">
    <property type="term" value="P:positive regulation of transcription by RNA polymerase II"/>
    <property type="evidence" value="ECO:0000315"/>
    <property type="project" value="WormBase"/>
</dbReference>
<dbReference type="GO" id="GO:0009791">
    <property type="term" value="P:post-embryonic development"/>
    <property type="evidence" value="ECO:0000316"/>
    <property type="project" value="WormBase"/>
</dbReference>
<dbReference type="CDD" id="cd06960">
    <property type="entry name" value="NR_DBD_HNF4A"/>
    <property type="match status" value="1"/>
</dbReference>
<dbReference type="CDD" id="cd06157">
    <property type="entry name" value="NR_LBD"/>
    <property type="match status" value="1"/>
</dbReference>
<dbReference type="FunFam" id="1.10.565.10:FF:000080">
    <property type="entry name" value="Nuclear Hormone Receptor family"/>
    <property type="match status" value="1"/>
</dbReference>
<dbReference type="FunFam" id="3.30.50.10:FF:000086">
    <property type="entry name" value="Nuclear Hormone Receptor family"/>
    <property type="match status" value="1"/>
</dbReference>
<dbReference type="Gene3D" id="3.30.50.10">
    <property type="entry name" value="Erythroid Transcription Factor GATA-1, subunit A"/>
    <property type="match status" value="1"/>
</dbReference>
<dbReference type="Gene3D" id="1.10.565.10">
    <property type="entry name" value="Retinoid X Receptor"/>
    <property type="match status" value="1"/>
</dbReference>
<dbReference type="InterPro" id="IPR049636">
    <property type="entry name" value="HNF4-like_DBD"/>
</dbReference>
<dbReference type="InterPro" id="IPR035500">
    <property type="entry name" value="NHR-like_dom_sf"/>
</dbReference>
<dbReference type="InterPro" id="IPR000536">
    <property type="entry name" value="Nucl_hrmn_rcpt_lig-bd"/>
</dbReference>
<dbReference type="InterPro" id="IPR001628">
    <property type="entry name" value="Znf_hrmn_rcpt"/>
</dbReference>
<dbReference type="InterPro" id="IPR013088">
    <property type="entry name" value="Znf_NHR/GATA"/>
</dbReference>
<dbReference type="PANTHER" id="PTHR46397:SF5">
    <property type="entry name" value="NUCLEAR HORMONE RECEPTOR FAMILY MEMBER NHR-20"/>
    <property type="match status" value="1"/>
</dbReference>
<dbReference type="PANTHER" id="PTHR46397">
    <property type="entry name" value="NUCLEAR HORMONE RECEPTOR FAMILY-RELATED"/>
    <property type="match status" value="1"/>
</dbReference>
<dbReference type="Pfam" id="PF00104">
    <property type="entry name" value="Hormone_recep"/>
    <property type="match status" value="1"/>
</dbReference>
<dbReference type="Pfam" id="PF00105">
    <property type="entry name" value="zf-C4"/>
    <property type="match status" value="1"/>
</dbReference>
<dbReference type="PRINTS" id="PR00047">
    <property type="entry name" value="STROIDFINGER"/>
</dbReference>
<dbReference type="SMART" id="SM00430">
    <property type="entry name" value="HOLI"/>
    <property type="match status" value="1"/>
</dbReference>
<dbReference type="SMART" id="SM00399">
    <property type="entry name" value="ZnF_C4"/>
    <property type="match status" value="1"/>
</dbReference>
<dbReference type="SUPFAM" id="SSF57716">
    <property type="entry name" value="Glucocorticoid receptor-like (DNA-binding domain)"/>
    <property type="match status" value="1"/>
</dbReference>
<dbReference type="SUPFAM" id="SSF48508">
    <property type="entry name" value="Nuclear receptor ligand-binding domain"/>
    <property type="match status" value="1"/>
</dbReference>
<dbReference type="PROSITE" id="PS51843">
    <property type="entry name" value="NR_LBD"/>
    <property type="match status" value="1"/>
</dbReference>
<dbReference type="PROSITE" id="PS00031">
    <property type="entry name" value="NUCLEAR_REC_DBD_1"/>
    <property type="match status" value="1"/>
</dbReference>
<dbReference type="PROSITE" id="PS51030">
    <property type="entry name" value="NUCLEAR_REC_DBD_2"/>
    <property type="match status" value="1"/>
</dbReference>
<evidence type="ECO:0000255" key="1">
    <source>
        <dbReference type="PROSITE-ProRule" id="PRU00407"/>
    </source>
</evidence>
<evidence type="ECO:0000255" key="2">
    <source>
        <dbReference type="PROSITE-ProRule" id="PRU01189"/>
    </source>
</evidence>
<evidence type="ECO:0000255" key="3">
    <source>
        <dbReference type="RuleBase" id="RU004334"/>
    </source>
</evidence>
<evidence type="ECO:0000256" key="4">
    <source>
        <dbReference type="SAM" id="MobiDB-lite"/>
    </source>
</evidence>
<evidence type="ECO:0000269" key="5">
    <source>
    </source>
</evidence>
<evidence type="ECO:0000269" key="6">
    <source>
    </source>
</evidence>
<evidence type="ECO:0000269" key="7">
    <source>
    </source>
</evidence>
<evidence type="ECO:0000269" key="8">
    <source>
    </source>
</evidence>
<evidence type="ECO:0000269" key="9">
    <source>
    </source>
</evidence>
<evidence type="ECO:0000269" key="10">
    <source>
    </source>
</evidence>
<evidence type="ECO:0000269" key="11">
    <source>
    </source>
</evidence>
<evidence type="ECO:0000305" key="12"/>
<evidence type="ECO:0000312" key="13">
    <source>
        <dbReference type="EMBL" id="AAO39183.1"/>
    </source>
</evidence>
<evidence type="ECO:0000312" key="14">
    <source>
        <dbReference type="Proteomes" id="UP000001940"/>
    </source>
</evidence>
<evidence type="ECO:0000312" key="15">
    <source>
        <dbReference type="WormBase" id="H10E21.3a"/>
    </source>
</evidence>
<evidence type="ECO:0000312" key="16">
    <source>
        <dbReference type="WormBase" id="H10E21.3b"/>
    </source>
</evidence>
<keyword id="KW-0025">Alternative splicing</keyword>
<keyword id="KW-0238">DNA-binding</keyword>
<keyword id="KW-0479">Metal-binding</keyword>
<keyword id="KW-0539">Nucleus</keyword>
<keyword id="KW-0675">Receptor</keyword>
<keyword id="KW-1185">Reference proteome</keyword>
<keyword id="KW-0804">Transcription</keyword>
<keyword id="KW-0805">Transcription regulation</keyword>
<keyword id="KW-0862">Zinc</keyword>
<keyword id="KW-0863">Zinc-finger</keyword>
<proteinExistence type="evidence at protein level"/>
<sequence>MTAEGRYLEIRKKTVKSKFRFPASSSSTRCLICSAQATGFHFEAQSCSACAAFFRRTVALTKSFKCITGRDDCNVHYSMHQICRSCRHKKCLSNGMKPGGVQPKKPNIETGRAFFTKSGLKRNKKFANVSPQTADEQKLVVEGVKVPKIEVQEPNSLEDLEQDNEFVIKTPTPRKISSSTSFSASTTTNYSTPGPSPMAPCSAGPDVLTLFIREEMKLGERRRLLFSERAVGTLLGQNKHCPYKKEDIKPLVFHDFRLTIKTHIMLVYEWLQTWPELQELDDFDRMSLLRKAVLIHFLLDPSFLSYQIGEPDKLIMQNGGFISTADHHGVGWEDETDISGENKRKYYVPIMKQITDEIMPAMEAMKITFEEFVALKALACFQGGFENVSEAKRHLITQQVNRIMTSLHTHYLENSEEKIAERFGTIVLMLSNIFTAGNDFVQNHREIDIFHIWDLDKLVLQLLNLDKIMETEARETAEKRAMRNGINVVNNNNDVLLGQAKLEK</sequence>
<reference evidence="13" key="1">
    <citation type="journal article" date="2005" name="J. Mol. Evol.">
        <title>Explosive lineage-specific expansion of the orphan nuclear receptor HNF4 in nematodes.</title>
        <authorList>
            <person name="Robinson-Rechavi M."/>
            <person name="Maina C.V."/>
            <person name="Gissendanner C.R."/>
            <person name="Laudet V."/>
            <person name="Sluder A."/>
        </authorList>
    </citation>
    <scope>NUCLEOTIDE SEQUENCE [MRNA] (ISOFORM A)</scope>
</reference>
<reference evidence="14" key="2">
    <citation type="journal article" date="1998" name="Science">
        <title>Genome sequence of the nematode C. elegans: a platform for investigating biology.</title>
        <authorList>
            <consortium name="The C. elegans sequencing consortium"/>
        </authorList>
    </citation>
    <scope>NUCLEOTIDE SEQUENCE [LARGE SCALE GENOMIC DNA]</scope>
    <source>
        <strain evidence="14">Bristol N2</strain>
    </source>
</reference>
<reference evidence="12" key="3">
    <citation type="journal article" date="2006" name="PLoS Genet.">
        <title>Genetic regulation of unsaturated fatty acid composition in C. elegans.</title>
        <authorList>
            <person name="Brock T.J."/>
            <person name="Browse J."/>
            <person name="Watts J.L."/>
        </authorList>
    </citation>
    <scope>FUNCTION</scope>
    <scope>DISRUPTION PHENOTYPE</scope>
</reference>
<reference evidence="12" key="4">
    <citation type="journal article" date="2011" name="PLoS Biol.">
        <title>Fatty acid desaturation links germ cell loss to longevity through NHR-80/HNF4 in C. elegans.</title>
        <authorList>
            <person name="Goudeau J."/>
            <person name="Bellemin S."/>
            <person name="Toselli-Mollereau E."/>
            <person name="Shamalnasab M."/>
            <person name="Chen Y."/>
            <person name="Aguilaniu H."/>
        </authorList>
    </citation>
    <scope>FUNCTION</scope>
    <scope>SUBCELLULAR LOCATION</scope>
    <scope>TISSUE SPECIFICITY</scope>
    <scope>DISRUPTION PHENOTYPE</scope>
</reference>
<reference evidence="12" key="5">
    <citation type="journal article" date="2012" name="PLoS Genet.">
        <title>Coordinate regulation of lipid metabolism by novel nuclear receptor partnerships.</title>
        <authorList>
            <person name="Pathare P.P."/>
            <person name="Lin A."/>
            <person name="Bornfeldt K.E."/>
            <person name="Taubert S."/>
            <person name="Van Gilst M.R."/>
        </authorList>
    </citation>
    <scope>FUNCTION</scope>
    <scope>INTERACTION WITH NHR-49</scope>
</reference>
<reference evidence="12" key="6">
    <citation type="journal article" date="2015" name="Science">
        <title>Lysosomal signaling molecules regulate longevity in Caenorhabditis elegans.</title>
        <authorList>
            <person name="Folick A."/>
            <person name="Oakley H.D."/>
            <person name="Yu Y."/>
            <person name="Armstrong E.H."/>
            <person name="Kumari M."/>
            <person name="Sanor L."/>
            <person name="Moore D.D."/>
            <person name="Ortlund E.A."/>
            <person name="Zechner R."/>
            <person name="Wang M.C."/>
        </authorList>
    </citation>
    <scope>FUNCTION</scope>
</reference>
<reference key="7">
    <citation type="journal article" date="2016" name="Autophagy">
        <title>Autophagy-mediated longevity is modulated by lipoprotein biogenesis.</title>
        <authorList>
            <person name="Seah N.E."/>
            <person name="de Magalhaes Filho C.D."/>
            <person name="Petrashen A.P."/>
            <person name="Henderson H.R."/>
            <person name="Laguer J."/>
            <person name="Gonzalez J."/>
            <person name="Dillin A."/>
            <person name="Hansen M."/>
            <person name="Lapierre L.R."/>
        </authorList>
    </citation>
    <scope>FUNCTION</scope>
</reference>
<reference evidence="12" key="8">
    <citation type="journal article" date="2022" name="Cell Rep.">
        <title>NHR-80 senses the mitochondrial UPR to rewire citrate metabolism for lipid accumulation in Caenorhabditis elegans.</title>
        <authorList>
            <person name="Yang R."/>
            <person name="Li Y."/>
            <person name="Wang Y."/>
            <person name="Zhang J."/>
            <person name="Fan Q."/>
            <person name="Tan J."/>
            <person name="Li W."/>
            <person name="Zou X."/>
            <person name="Liang B."/>
        </authorList>
    </citation>
    <scope>FUNCTION</scope>
    <scope>SUBCELLULAR LOCATION</scope>
    <scope>TISSUE SPECIFICITY</scope>
    <scope>INDUCTION</scope>
</reference>
<reference evidence="12" key="9">
    <citation type="journal article" date="2022" name="Nat. Commun.">
        <title>Histone H3K4me3 modification is a transgenerational epigenetic signal for lipid metabolism in Caenorhabditis elegans.</title>
        <authorList>
            <person name="Wan Q.L."/>
            <person name="Meng X."/>
            <person name="Wang C."/>
            <person name="Dai W."/>
            <person name="Luo Z."/>
            <person name="Yin Z."/>
            <person name="Ju Z."/>
            <person name="Fu X."/>
            <person name="Yang J."/>
            <person name="Ye Q."/>
            <person name="Zhang Z.H."/>
            <person name="Zhou Q."/>
        </authorList>
    </citation>
    <scope>FUNCTION</scope>
    <scope>DISRUPTION PHENOTYPE</scope>
</reference>
<accession>Q8ITW8</accession>
<accession>O76668</accession>
<accession>Q9BJK7</accession>
<organism evidence="14">
    <name type="scientific">Caenorhabditis elegans</name>
    <dbReference type="NCBI Taxonomy" id="6239"/>
    <lineage>
        <taxon>Eukaryota</taxon>
        <taxon>Metazoa</taxon>
        <taxon>Ecdysozoa</taxon>
        <taxon>Nematoda</taxon>
        <taxon>Chromadorea</taxon>
        <taxon>Rhabditida</taxon>
        <taxon>Rhabditina</taxon>
        <taxon>Rhabditomorpha</taxon>
        <taxon>Rhabditoidea</taxon>
        <taxon>Rhabditidae</taxon>
        <taxon>Peloderinae</taxon>
        <taxon>Caenorhabditis</taxon>
    </lineage>
</organism>